<sequence length="148" mass="15224">IEDEYGNVLHASGGYAAPAAYAAPVAYAAPVAKAVVAAPAVAYAAPVAKAVVAEPVAYPKYEFNYGVHDAHTGDIKQQSEARDGDVVKGSYSLVEPDGSTRTVEYQADDHNGFNAVVHRTPGTHPVAVAPVAVAHAPVAVAHAPIAYH</sequence>
<dbReference type="PIR" id="S05638">
    <property type="entry name" value="S05638"/>
</dbReference>
<dbReference type="GO" id="GO:0031012">
    <property type="term" value="C:extracellular matrix"/>
    <property type="evidence" value="ECO:0007669"/>
    <property type="project" value="TreeGrafter"/>
</dbReference>
<dbReference type="GO" id="GO:0005615">
    <property type="term" value="C:extracellular space"/>
    <property type="evidence" value="ECO:0007669"/>
    <property type="project" value="TreeGrafter"/>
</dbReference>
<dbReference type="GO" id="GO:0042302">
    <property type="term" value="F:structural constituent of cuticle"/>
    <property type="evidence" value="ECO:0007669"/>
    <property type="project" value="UniProtKB-KW"/>
</dbReference>
<dbReference type="InterPro" id="IPR031311">
    <property type="entry name" value="CHIT_BIND_RR_consensus"/>
</dbReference>
<dbReference type="InterPro" id="IPR000618">
    <property type="entry name" value="Insect_cuticle"/>
</dbReference>
<dbReference type="InterPro" id="IPR051217">
    <property type="entry name" value="Insect_Cuticle_Struc_Prot"/>
</dbReference>
<dbReference type="PANTHER" id="PTHR12236:SF95">
    <property type="entry name" value="CUTICULAR PROTEIN 76BD, ISOFORM C-RELATED"/>
    <property type="match status" value="1"/>
</dbReference>
<dbReference type="PANTHER" id="PTHR12236">
    <property type="entry name" value="STRUCTURAL CONTITUENT OF CUTICLE"/>
    <property type="match status" value="1"/>
</dbReference>
<dbReference type="Pfam" id="PF00379">
    <property type="entry name" value="Chitin_bind_4"/>
    <property type="match status" value="1"/>
</dbReference>
<dbReference type="PRINTS" id="PR00947">
    <property type="entry name" value="CUTICLE"/>
</dbReference>
<dbReference type="PROSITE" id="PS00233">
    <property type="entry name" value="CHIT_BIND_RR_1"/>
    <property type="match status" value="1"/>
</dbReference>
<dbReference type="PROSITE" id="PS51155">
    <property type="entry name" value="CHIT_BIND_RR_2"/>
    <property type="match status" value="1"/>
</dbReference>
<keyword id="KW-0193">Cuticle</keyword>
<keyword id="KW-0903">Direct protein sequencing</keyword>
<keyword id="KW-0677">Repeat</keyword>
<accession>P11734</accession>
<comment type="function">
    <text>Component of the cuticle of migratory locust which contains more than 100 different structural proteins.</text>
</comment>
<comment type="domain">
    <text>The tetrapeptide (A-A-P-[AV]) repeats found throughout the protein are also present in many proteins constituting the protective envelope of other species.</text>
</comment>
<protein>
    <recommendedName>
        <fullName>Cuticle protein 8</fullName>
    </recommendedName>
    <alternativeName>
        <fullName>LM-ACP 8</fullName>
        <shortName>LM-8</shortName>
    </alternativeName>
</protein>
<proteinExistence type="evidence at protein level"/>
<organism>
    <name type="scientific">Locusta migratoria</name>
    <name type="common">Migratory locust</name>
    <dbReference type="NCBI Taxonomy" id="7004"/>
    <lineage>
        <taxon>Eukaryota</taxon>
        <taxon>Metazoa</taxon>
        <taxon>Ecdysozoa</taxon>
        <taxon>Arthropoda</taxon>
        <taxon>Hexapoda</taxon>
        <taxon>Insecta</taxon>
        <taxon>Pterygota</taxon>
        <taxon>Neoptera</taxon>
        <taxon>Polyneoptera</taxon>
        <taxon>Orthoptera</taxon>
        <taxon>Caelifera</taxon>
        <taxon>Acrididea</taxon>
        <taxon>Acridomorpha</taxon>
        <taxon>Acridoidea</taxon>
        <taxon>Acrididae</taxon>
        <taxon>Oedipodinae</taxon>
        <taxon>Locusta</taxon>
    </lineage>
</organism>
<name>CU08_LOCMI</name>
<feature type="chain" id="PRO_0000196093" description="Cuticle protein 8">
    <location>
        <begin position="1"/>
        <end position="148"/>
    </location>
</feature>
<feature type="repeat" description="1">
    <location>
        <begin position="16"/>
        <end position="19"/>
    </location>
</feature>
<feature type="repeat" description="2">
    <location>
        <position position="22"/>
    </location>
</feature>
<feature type="repeat" description="3">
    <location>
        <begin position="28"/>
        <end position="31"/>
    </location>
</feature>
<feature type="repeat" description="4">
    <location>
        <begin position="37"/>
        <end position="40"/>
    </location>
</feature>
<feature type="repeat" description="5">
    <location>
        <begin position="44"/>
        <end position="47"/>
    </location>
</feature>
<feature type="domain" description="Chitin-binding type R&amp;R" evidence="1">
    <location>
        <begin position="58"/>
        <end position="128"/>
    </location>
</feature>
<evidence type="ECO:0000255" key="1">
    <source>
        <dbReference type="PROSITE-ProRule" id="PRU00497"/>
    </source>
</evidence>
<reference key="1">
    <citation type="journal article" date="1989" name="Biochem. J.">
        <title>Plasma-desorption mass spectrometry as an aid in protein sequence determination. Application of the method on a cuticular protein from the migratory locust (Locusta migratoria).</title>
        <authorList>
            <person name="Klarskov K."/>
            <person name="Hoejrup P."/>
            <person name="Andersen S.O."/>
            <person name="Roepstorff P."/>
        </authorList>
    </citation>
    <scope>PROTEIN SEQUENCE</scope>
</reference>
<reference key="2">
    <citation type="journal article" date="1986" name="Eur. J. Biochem.">
        <title>Isolation, characterization, and N-terminal sequence studies of cuticular proteins from the migratory locust, Locusta migratoria.</title>
        <authorList>
            <person name="Hoejrup P."/>
            <person name="Andersen S.O."/>
            <person name="Roepstorff P."/>
        </authorList>
    </citation>
    <scope>PROTEIN SEQUENCE OF 1-56</scope>
</reference>